<evidence type="ECO:0000255" key="1">
    <source>
        <dbReference type="HAMAP-Rule" id="MF_01450"/>
    </source>
</evidence>
<sequence>MSKVCIIAWVHGRVQGVGFRYTTQHEAQRLGLTGYARNLDDGSVEVVACGESEQVDKLMKWLKDGGPRSARVDRVLSEPHRPGEELTGFRIRY</sequence>
<accession>A8AIA9</accession>
<organism>
    <name type="scientific">Citrobacter koseri (strain ATCC BAA-895 / CDC 4225-83 / SGSC4696)</name>
    <dbReference type="NCBI Taxonomy" id="290338"/>
    <lineage>
        <taxon>Bacteria</taxon>
        <taxon>Pseudomonadati</taxon>
        <taxon>Pseudomonadota</taxon>
        <taxon>Gammaproteobacteria</taxon>
        <taxon>Enterobacterales</taxon>
        <taxon>Enterobacteriaceae</taxon>
        <taxon>Citrobacter</taxon>
    </lineage>
</organism>
<feature type="chain" id="PRO_0000326682" description="Acylphosphatase">
    <location>
        <begin position="1"/>
        <end position="93"/>
    </location>
</feature>
<feature type="domain" description="Acylphosphatase-like" evidence="1">
    <location>
        <begin position="5"/>
        <end position="93"/>
    </location>
</feature>
<feature type="active site" evidence="1">
    <location>
        <position position="20"/>
    </location>
</feature>
<feature type="active site" evidence="1">
    <location>
        <position position="38"/>
    </location>
</feature>
<protein>
    <recommendedName>
        <fullName evidence="1">Acylphosphatase</fullName>
        <ecNumber evidence="1">3.6.1.7</ecNumber>
    </recommendedName>
    <alternativeName>
        <fullName evidence="1">Acylphosphate phosphohydrolase</fullName>
    </alternativeName>
</protein>
<comment type="catalytic activity">
    <reaction evidence="1">
        <text>an acyl phosphate + H2O = a carboxylate + phosphate + H(+)</text>
        <dbReference type="Rhea" id="RHEA:14965"/>
        <dbReference type="ChEBI" id="CHEBI:15377"/>
        <dbReference type="ChEBI" id="CHEBI:15378"/>
        <dbReference type="ChEBI" id="CHEBI:29067"/>
        <dbReference type="ChEBI" id="CHEBI:43474"/>
        <dbReference type="ChEBI" id="CHEBI:59918"/>
        <dbReference type="EC" id="3.6.1.7"/>
    </reaction>
</comment>
<comment type="similarity">
    <text evidence="1">Belongs to the acylphosphatase family.</text>
</comment>
<proteinExistence type="inferred from homology"/>
<reference key="1">
    <citation type="submission" date="2007-08" db="EMBL/GenBank/DDBJ databases">
        <authorList>
            <consortium name="The Citrobacter koseri Genome Sequencing Project"/>
            <person name="McClelland M."/>
            <person name="Sanderson E.K."/>
            <person name="Porwollik S."/>
            <person name="Spieth J."/>
            <person name="Clifton W.S."/>
            <person name="Latreille P."/>
            <person name="Courtney L."/>
            <person name="Wang C."/>
            <person name="Pepin K."/>
            <person name="Bhonagiri V."/>
            <person name="Nash W."/>
            <person name="Johnson M."/>
            <person name="Thiruvilangam P."/>
            <person name="Wilson R."/>
        </authorList>
    </citation>
    <scope>NUCLEOTIDE SEQUENCE [LARGE SCALE GENOMIC DNA]</scope>
    <source>
        <strain>ATCC BAA-895 / CDC 4225-83 / SGSC4696</strain>
    </source>
</reference>
<gene>
    <name type="primary">acyP</name>
    <name type="ordered locus">CKO_02098</name>
</gene>
<name>ACYP_CITK8</name>
<dbReference type="EC" id="3.6.1.7" evidence="1"/>
<dbReference type="EMBL" id="CP000822">
    <property type="protein sequence ID" value="ABV13222.1"/>
    <property type="molecule type" value="Genomic_DNA"/>
</dbReference>
<dbReference type="SMR" id="A8AIA9"/>
<dbReference type="STRING" id="290338.CKO_02098"/>
<dbReference type="GeneID" id="45136047"/>
<dbReference type="KEGG" id="cko:CKO_02098"/>
<dbReference type="HOGENOM" id="CLU_141932_1_2_6"/>
<dbReference type="OrthoDB" id="5295388at2"/>
<dbReference type="Proteomes" id="UP000008148">
    <property type="component" value="Chromosome"/>
</dbReference>
<dbReference type="GO" id="GO:0003998">
    <property type="term" value="F:acylphosphatase activity"/>
    <property type="evidence" value="ECO:0007669"/>
    <property type="project" value="UniProtKB-UniRule"/>
</dbReference>
<dbReference type="FunFam" id="3.30.70.100:FF:000012">
    <property type="entry name" value="Acylphosphatase"/>
    <property type="match status" value="1"/>
</dbReference>
<dbReference type="Gene3D" id="3.30.70.100">
    <property type="match status" value="1"/>
</dbReference>
<dbReference type="HAMAP" id="MF_01450">
    <property type="entry name" value="Acylphosphatase_entero"/>
    <property type="match status" value="1"/>
</dbReference>
<dbReference type="InterPro" id="IPR020456">
    <property type="entry name" value="Acylphosphatase"/>
</dbReference>
<dbReference type="InterPro" id="IPR001792">
    <property type="entry name" value="Acylphosphatase-like_dom"/>
</dbReference>
<dbReference type="InterPro" id="IPR036046">
    <property type="entry name" value="Acylphosphatase-like_dom_sf"/>
</dbReference>
<dbReference type="InterPro" id="IPR028627">
    <property type="entry name" value="Acylphosphatase_bac"/>
</dbReference>
<dbReference type="InterPro" id="IPR017968">
    <property type="entry name" value="Acylphosphatase_CS"/>
</dbReference>
<dbReference type="NCBIfam" id="NF011000">
    <property type="entry name" value="PRK14426.1"/>
    <property type="match status" value="1"/>
</dbReference>
<dbReference type="NCBIfam" id="NF011022">
    <property type="entry name" value="PRK14451.1"/>
    <property type="match status" value="1"/>
</dbReference>
<dbReference type="PANTHER" id="PTHR47268">
    <property type="entry name" value="ACYLPHOSPHATASE"/>
    <property type="match status" value="1"/>
</dbReference>
<dbReference type="PANTHER" id="PTHR47268:SF4">
    <property type="entry name" value="ACYLPHOSPHATASE"/>
    <property type="match status" value="1"/>
</dbReference>
<dbReference type="Pfam" id="PF00708">
    <property type="entry name" value="Acylphosphatase"/>
    <property type="match status" value="1"/>
</dbReference>
<dbReference type="PRINTS" id="PR00112">
    <property type="entry name" value="ACYLPHPHTASE"/>
</dbReference>
<dbReference type="SUPFAM" id="SSF54975">
    <property type="entry name" value="Acylphosphatase/BLUF domain-like"/>
    <property type="match status" value="1"/>
</dbReference>
<dbReference type="PROSITE" id="PS00150">
    <property type="entry name" value="ACYLPHOSPHATASE_1"/>
    <property type="match status" value="1"/>
</dbReference>
<dbReference type="PROSITE" id="PS00151">
    <property type="entry name" value="ACYLPHOSPHATASE_2"/>
    <property type="match status" value="1"/>
</dbReference>
<dbReference type="PROSITE" id="PS51160">
    <property type="entry name" value="ACYLPHOSPHATASE_3"/>
    <property type="match status" value="1"/>
</dbReference>
<keyword id="KW-0378">Hydrolase</keyword>
<keyword id="KW-1185">Reference proteome</keyword>